<comment type="function">
    <text evidence="1">Probably participates in a plant defense mechanism.</text>
</comment>
<comment type="tissue specificity">
    <text evidence="2">Expressed in root nodules but not in seed.</text>
</comment>
<comment type="domain">
    <text evidence="4">The presence of a 'disulfide through disulfide knot' structurally defines this protein as a knottin.</text>
</comment>
<comment type="PTM">
    <text evidence="2">Contains 3 disulfide bonds.</text>
</comment>
<comment type="PTM">
    <text evidence="1 2">This is a cyclic peptide.</text>
</comment>
<comment type="mass spectrometry" mass="3021.238" method="MALDI" evidence="2"/>
<comment type="similarity">
    <text evidence="1">Belongs to the cyclotide family. Moebius subfamily.</text>
</comment>
<keyword id="KW-0903">Direct protein sequencing</keyword>
<keyword id="KW-1015">Disulfide bond</keyword>
<keyword id="KW-0611">Plant defense</keyword>
<dbReference type="SMR" id="C0HJS5"/>
<dbReference type="GO" id="GO:0006952">
    <property type="term" value="P:defense response"/>
    <property type="evidence" value="ECO:0007669"/>
    <property type="project" value="UniProtKB-KW"/>
</dbReference>
<dbReference type="InterPro" id="IPR005535">
    <property type="entry name" value="Cyclotide"/>
</dbReference>
<dbReference type="InterPro" id="IPR012324">
    <property type="entry name" value="Cyclotide_moebius_CS"/>
</dbReference>
<dbReference type="InterPro" id="IPR036146">
    <property type="entry name" value="Cyclotide_sf"/>
</dbReference>
<dbReference type="Pfam" id="PF03784">
    <property type="entry name" value="Cyclotide"/>
    <property type="match status" value="1"/>
</dbReference>
<dbReference type="PIRSF" id="PIRSF037891">
    <property type="entry name" value="Cycloviolacin"/>
    <property type="match status" value="1"/>
</dbReference>
<dbReference type="SUPFAM" id="SSF57038">
    <property type="entry name" value="Cyclotides"/>
    <property type="match status" value="1"/>
</dbReference>
<dbReference type="PROSITE" id="PS51052">
    <property type="entry name" value="CYCLOTIDE"/>
    <property type="match status" value="1"/>
</dbReference>
<dbReference type="PROSITE" id="PS60009">
    <property type="entry name" value="CYCLOTIDE_MOEBIUS"/>
    <property type="match status" value="1"/>
</dbReference>
<evidence type="ECO:0000255" key="1">
    <source>
        <dbReference type="PROSITE-ProRule" id="PRU00395"/>
    </source>
</evidence>
<evidence type="ECO:0000269" key="2">
    <source>
    </source>
</evidence>
<evidence type="ECO:0000303" key="3">
    <source>
    </source>
</evidence>
<evidence type="ECO:0000305" key="4"/>
<accession>C0HJS5</accession>
<protein>
    <recommendedName>
        <fullName evidence="3">Cliotide T18</fullName>
    </recommendedName>
    <alternativeName>
        <fullName evidence="3">Cyclotide cT18</fullName>
    </alternativeName>
</protein>
<proteinExistence type="evidence at protein level"/>
<name>CYC18_CLITE</name>
<reference evidence="4" key="1">
    <citation type="journal article" date="2016" name="FEBS J.">
        <title>Immunostimulating and Gram-negative-specific antibacterial cyclotides from the butterfly pea Clitoria ternatea.</title>
        <authorList>
            <person name="Nguyen K.N."/>
            <person name="Nguyen G.K."/>
            <person name="Nguyen P.Q."/>
            <person name="Ang K.H."/>
            <person name="Dedon P.C."/>
            <person name="Tam J.P."/>
        </authorList>
    </citation>
    <scope>PROTEIN SEQUENCE</scope>
    <scope>TISSUE SPECIFICITY</scope>
    <scope>CYCLIZATION</scope>
    <scope>PRESENCE OF DISULFIDE BONDS</scope>
    <scope>MASS SPECTROMETRY</scope>
    <scope>IDENTIFICATION BY MASS SPECTROMETRY</scope>
</reference>
<organism evidence="3">
    <name type="scientific">Clitoria ternatea</name>
    <name type="common">Butterfly pea</name>
    <dbReference type="NCBI Taxonomy" id="43366"/>
    <lineage>
        <taxon>Eukaryota</taxon>
        <taxon>Viridiplantae</taxon>
        <taxon>Streptophyta</taxon>
        <taxon>Embryophyta</taxon>
        <taxon>Tracheophyta</taxon>
        <taxon>Spermatophyta</taxon>
        <taxon>Magnoliopsida</taxon>
        <taxon>eudicotyledons</taxon>
        <taxon>Gunneridae</taxon>
        <taxon>Pentapetalae</taxon>
        <taxon>rosids</taxon>
        <taxon>fabids</taxon>
        <taxon>Fabales</taxon>
        <taxon>Fabaceae</taxon>
        <taxon>Papilionoideae</taxon>
        <taxon>50 kb inversion clade</taxon>
        <taxon>NPAAA clade</taxon>
        <taxon>indigoferoid/millettioid clade</taxon>
        <taxon>Phaseoleae</taxon>
        <taxon>Clitoria</taxon>
    </lineage>
</organism>
<sequence length="29" mass="3048">GLPICGETCFTGTCYTPGCTCSYPVCKKN</sequence>
<feature type="peptide" id="PRO_0000436315" description="Cliotide T18" evidence="2">
    <location>
        <begin position="1"/>
        <end position="29"/>
    </location>
</feature>
<feature type="disulfide bond" evidence="1">
    <location>
        <begin position="5"/>
        <end position="19"/>
    </location>
</feature>
<feature type="disulfide bond" evidence="1">
    <location>
        <begin position="9"/>
        <end position="21"/>
    </location>
</feature>
<feature type="disulfide bond" evidence="1">
    <location>
        <begin position="14"/>
        <end position="26"/>
    </location>
</feature>
<feature type="cross-link" description="Cyclopeptide (Gly-Asn)" evidence="2">
    <location>
        <begin position="1"/>
        <end position="29"/>
    </location>
</feature>